<proteinExistence type="inferred from homology"/>
<keyword id="KW-0028">Amino-acid biosynthesis</keyword>
<keyword id="KW-0963">Cytoplasm</keyword>
<keyword id="KW-0368">Histidine biosynthesis</keyword>
<keyword id="KW-0413">Isomerase</keyword>
<keyword id="KW-1185">Reference proteome</keyword>
<sequence>MIIIPAIDLKNGCCVRLEQGLMEKDTVFNDDPGAQAAEWQRQGGEILHIVDLDGAFAGEPKNRSAIEAIVKSVTIPTQLGGGIRDIATIEAYLSLGIGRVIIGTAAQRNPAFVKEACAKFAGKIVVGIDAKNGMVAVQGWAEVTGITATELARQFEGDGVSAIIYTDISRDGMMQGPNIQATKALAEAINIPVIASGGLSSLQDIENLIAIESSGVTGVITGKAIYSGAINLAEAIALTKKQR</sequence>
<protein>
    <recommendedName>
        <fullName evidence="1">1-(5-phosphoribosyl)-5-[(5-phosphoribosylamino)methylideneamino] imidazole-4-carboxamide isomerase</fullName>
        <ecNumber evidence="1">5.3.1.16</ecNumber>
    </recommendedName>
    <alternativeName>
        <fullName evidence="1">Phosphoribosylformimino-5-aminoimidazole carboxamide ribotide isomerase</fullName>
    </alternativeName>
</protein>
<organism>
    <name type="scientific">Citrifermentans bemidjiense (strain ATCC BAA-1014 / DSM 16622 / JCM 12645 / Bem)</name>
    <name type="common">Geobacter bemidjiensis</name>
    <dbReference type="NCBI Taxonomy" id="404380"/>
    <lineage>
        <taxon>Bacteria</taxon>
        <taxon>Pseudomonadati</taxon>
        <taxon>Thermodesulfobacteriota</taxon>
        <taxon>Desulfuromonadia</taxon>
        <taxon>Geobacterales</taxon>
        <taxon>Geobacteraceae</taxon>
        <taxon>Citrifermentans</taxon>
    </lineage>
</organism>
<feature type="chain" id="PRO_1000135121" description="1-(5-phosphoribosyl)-5-[(5-phosphoribosylamino)methylideneamino] imidazole-4-carboxamide isomerase">
    <location>
        <begin position="1"/>
        <end position="243"/>
    </location>
</feature>
<feature type="active site" description="Proton acceptor" evidence="1">
    <location>
        <position position="8"/>
    </location>
</feature>
<feature type="active site" description="Proton donor" evidence="1">
    <location>
        <position position="129"/>
    </location>
</feature>
<dbReference type="EC" id="5.3.1.16" evidence="1"/>
<dbReference type="EMBL" id="CP001124">
    <property type="protein sequence ID" value="ACH40693.1"/>
    <property type="molecule type" value="Genomic_DNA"/>
</dbReference>
<dbReference type="RefSeq" id="WP_012532130.1">
    <property type="nucleotide sequence ID" value="NC_011146.1"/>
</dbReference>
<dbReference type="SMR" id="B5EDR5"/>
<dbReference type="STRING" id="404380.Gbem_3701"/>
<dbReference type="KEGG" id="gbm:Gbem_3701"/>
<dbReference type="eggNOG" id="COG0106">
    <property type="taxonomic scope" value="Bacteria"/>
</dbReference>
<dbReference type="HOGENOM" id="CLU_048577_1_1_7"/>
<dbReference type="OrthoDB" id="9807749at2"/>
<dbReference type="UniPathway" id="UPA00031">
    <property type="reaction ID" value="UER00009"/>
</dbReference>
<dbReference type="Proteomes" id="UP000008825">
    <property type="component" value="Chromosome"/>
</dbReference>
<dbReference type="GO" id="GO:0005737">
    <property type="term" value="C:cytoplasm"/>
    <property type="evidence" value="ECO:0007669"/>
    <property type="project" value="UniProtKB-SubCell"/>
</dbReference>
<dbReference type="GO" id="GO:0003949">
    <property type="term" value="F:1-(5-phosphoribosyl)-5-[(5-phosphoribosylamino)methylideneamino]imidazole-4-carboxamide isomerase activity"/>
    <property type="evidence" value="ECO:0007669"/>
    <property type="project" value="UniProtKB-UniRule"/>
</dbReference>
<dbReference type="GO" id="GO:0000105">
    <property type="term" value="P:L-histidine biosynthetic process"/>
    <property type="evidence" value="ECO:0007669"/>
    <property type="project" value="UniProtKB-UniRule"/>
</dbReference>
<dbReference type="GO" id="GO:0000162">
    <property type="term" value="P:L-tryptophan biosynthetic process"/>
    <property type="evidence" value="ECO:0007669"/>
    <property type="project" value="TreeGrafter"/>
</dbReference>
<dbReference type="CDD" id="cd04732">
    <property type="entry name" value="HisA"/>
    <property type="match status" value="1"/>
</dbReference>
<dbReference type="FunFam" id="3.20.20.70:FF:000009">
    <property type="entry name" value="1-(5-phosphoribosyl)-5-[(5-phosphoribosylamino)methylideneamino] imidazole-4-carboxamide isomerase"/>
    <property type="match status" value="1"/>
</dbReference>
<dbReference type="Gene3D" id="3.20.20.70">
    <property type="entry name" value="Aldolase class I"/>
    <property type="match status" value="1"/>
</dbReference>
<dbReference type="HAMAP" id="MF_01014">
    <property type="entry name" value="HisA"/>
    <property type="match status" value="1"/>
</dbReference>
<dbReference type="InterPro" id="IPR013785">
    <property type="entry name" value="Aldolase_TIM"/>
</dbReference>
<dbReference type="InterPro" id="IPR006062">
    <property type="entry name" value="His_biosynth"/>
</dbReference>
<dbReference type="InterPro" id="IPR006063">
    <property type="entry name" value="HisA_bact_arch"/>
</dbReference>
<dbReference type="InterPro" id="IPR044524">
    <property type="entry name" value="Isoase_HisA-like"/>
</dbReference>
<dbReference type="InterPro" id="IPR023016">
    <property type="entry name" value="Isoase_HisA-like_bact"/>
</dbReference>
<dbReference type="InterPro" id="IPR011060">
    <property type="entry name" value="RibuloseP-bd_barrel"/>
</dbReference>
<dbReference type="NCBIfam" id="TIGR00007">
    <property type="entry name" value="1-(5-phosphoribosyl)-5-[(5-phosphoribosylamino)methylideneamino]imidazole-4-carboxamide isomerase"/>
    <property type="match status" value="1"/>
</dbReference>
<dbReference type="NCBIfam" id="NF010112">
    <property type="entry name" value="PRK13585.1"/>
    <property type="match status" value="1"/>
</dbReference>
<dbReference type="PANTHER" id="PTHR43090">
    <property type="entry name" value="1-(5-PHOSPHORIBOSYL)-5-[(5-PHOSPHORIBOSYLAMINO)METHYLIDENEAMINO] IMIDAZOLE-4-CARBOXAMIDE ISOMERASE"/>
    <property type="match status" value="1"/>
</dbReference>
<dbReference type="PANTHER" id="PTHR43090:SF2">
    <property type="entry name" value="1-(5-PHOSPHORIBOSYL)-5-[(5-PHOSPHORIBOSYLAMINO)METHYLIDENEAMINO] IMIDAZOLE-4-CARBOXAMIDE ISOMERASE"/>
    <property type="match status" value="1"/>
</dbReference>
<dbReference type="Pfam" id="PF00977">
    <property type="entry name" value="His_biosynth"/>
    <property type="match status" value="1"/>
</dbReference>
<dbReference type="SUPFAM" id="SSF51366">
    <property type="entry name" value="Ribulose-phoshate binding barrel"/>
    <property type="match status" value="1"/>
</dbReference>
<gene>
    <name evidence="1" type="primary">hisA</name>
    <name type="ordered locus">Gbem_3701</name>
</gene>
<name>HIS4_CITBB</name>
<comment type="catalytic activity">
    <reaction evidence="1">
        <text>1-(5-phospho-beta-D-ribosyl)-5-[(5-phospho-beta-D-ribosylamino)methylideneamino]imidazole-4-carboxamide = 5-[(5-phospho-1-deoxy-D-ribulos-1-ylimino)methylamino]-1-(5-phospho-beta-D-ribosyl)imidazole-4-carboxamide</text>
        <dbReference type="Rhea" id="RHEA:15469"/>
        <dbReference type="ChEBI" id="CHEBI:58435"/>
        <dbReference type="ChEBI" id="CHEBI:58525"/>
        <dbReference type="EC" id="5.3.1.16"/>
    </reaction>
</comment>
<comment type="pathway">
    <text evidence="1">Amino-acid biosynthesis; L-histidine biosynthesis; L-histidine from 5-phospho-alpha-D-ribose 1-diphosphate: step 4/9.</text>
</comment>
<comment type="subcellular location">
    <subcellularLocation>
        <location evidence="1">Cytoplasm</location>
    </subcellularLocation>
</comment>
<comment type="similarity">
    <text evidence="1">Belongs to the HisA/HisF family.</text>
</comment>
<evidence type="ECO:0000255" key="1">
    <source>
        <dbReference type="HAMAP-Rule" id="MF_01014"/>
    </source>
</evidence>
<reference key="1">
    <citation type="submission" date="2008-07" db="EMBL/GenBank/DDBJ databases">
        <title>Complete sequence of Geobacter bemidjiensis BEM.</title>
        <authorList>
            <consortium name="US DOE Joint Genome Institute"/>
            <person name="Lucas S."/>
            <person name="Copeland A."/>
            <person name="Lapidus A."/>
            <person name="Glavina del Rio T."/>
            <person name="Dalin E."/>
            <person name="Tice H."/>
            <person name="Bruce D."/>
            <person name="Goodwin L."/>
            <person name="Pitluck S."/>
            <person name="Kiss H."/>
            <person name="Brettin T."/>
            <person name="Detter J.C."/>
            <person name="Han C."/>
            <person name="Kuske C.R."/>
            <person name="Schmutz J."/>
            <person name="Larimer F."/>
            <person name="Land M."/>
            <person name="Hauser L."/>
            <person name="Kyrpides N."/>
            <person name="Lykidis A."/>
            <person name="Lovley D."/>
            <person name="Richardson P."/>
        </authorList>
    </citation>
    <scope>NUCLEOTIDE SEQUENCE [LARGE SCALE GENOMIC DNA]</scope>
    <source>
        <strain>ATCC BAA-1014 / DSM 16622 / JCM 12645 / Bem</strain>
    </source>
</reference>
<accession>B5EDR5</accession>